<protein>
    <recommendedName>
        <fullName>NADH oxidoreductase HCR</fullName>
        <ecNumber>1.-.-.-</ecNumber>
    </recommendedName>
</protein>
<keyword id="KW-0001">2Fe-2S</keyword>
<keyword id="KW-0249">Electron transport</keyword>
<keyword id="KW-0274">FAD</keyword>
<keyword id="KW-0285">Flavoprotein</keyword>
<keyword id="KW-0408">Iron</keyword>
<keyword id="KW-0411">Iron-sulfur</keyword>
<keyword id="KW-0479">Metal-binding</keyword>
<keyword id="KW-0520">NAD</keyword>
<keyword id="KW-0560">Oxidoreductase</keyword>
<keyword id="KW-1185">Reference proteome</keyword>
<keyword id="KW-0813">Transport</keyword>
<accession>P75824</accession>
<proteinExistence type="evidence at protein level"/>
<gene>
    <name type="primary">hcr</name>
    <name type="synonym">ybjV</name>
    <name type="ordered locus">b0872</name>
    <name type="ordered locus">JW5117</name>
</gene>
<name>HCR_ECOLI</name>
<feature type="chain" id="PRO_0000083928" description="NADH oxidoreductase HCR">
    <location>
        <begin position="1"/>
        <end position="322"/>
    </location>
</feature>
<feature type="domain" description="FAD-binding FR-type" evidence="2">
    <location>
        <begin position="7"/>
        <end position="107"/>
    </location>
</feature>
<feature type="domain" description="2Fe-2S ferredoxin-type" evidence="1">
    <location>
        <begin position="237"/>
        <end position="322"/>
    </location>
</feature>
<feature type="region of interest" description="Oxidoreductase">
    <location>
        <begin position="111"/>
        <end position="213"/>
    </location>
</feature>
<feature type="binding site" evidence="1">
    <location>
        <position position="273"/>
    </location>
    <ligand>
        <name>[2Fe-2S] cluster</name>
        <dbReference type="ChEBI" id="CHEBI:190135"/>
    </ligand>
</feature>
<feature type="binding site" evidence="1">
    <location>
        <position position="278"/>
    </location>
    <ligand>
        <name>[2Fe-2S] cluster</name>
        <dbReference type="ChEBI" id="CHEBI:190135"/>
    </ligand>
</feature>
<feature type="binding site" evidence="1">
    <location>
        <position position="281"/>
    </location>
    <ligand>
        <name>[2Fe-2S] cluster</name>
        <dbReference type="ChEBI" id="CHEBI:190135"/>
    </ligand>
</feature>
<feature type="binding site" evidence="1">
    <location>
        <position position="311"/>
    </location>
    <ligand>
        <name>[2Fe-2S] cluster</name>
        <dbReference type="ChEBI" id="CHEBI:190135"/>
    </ligand>
</feature>
<comment type="function">
    <text>NADH oxidoreductase acting in concert with HCP.</text>
</comment>
<comment type="cofactor">
    <cofactor>
        <name>[2Fe-2S] cluster</name>
        <dbReference type="ChEBI" id="CHEBI:190135"/>
    </cofactor>
    <text>Binds 1 [2Fe-2S] cluster.</text>
</comment>
<comment type="cofactor">
    <cofactor>
        <name>FAD</name>
        <dbReference type="ChEBI" id="CHEBI:57692"/>
    </cofactor>
</comment>
<comment type="similarity">
    <text evidence="3">In the N-terminal section; belongs to the FAD-binding oxidoreductase type 6 family.</text>
</comment>
<reference key="1">
    <citation type="journal article" date="1996" name="DNA Res.">
        <title>A 718-kb DNA sequence of the Escherichia coli K-12 genome corresponding to the 12.7-28.0 min region on the linkage map.</title>
        <authorList>
            <person name="Oshima T."/>
            <person name="Aiba H."/>
            <person name="Baba T."/>
            <person name="Fujita K."/>
            <person name="Hayashi K."/>
            <person name="Honjo A."/>
            <person name="Ikemoto K."/>
            <person name="Inada T."/>
            <person name="Itoh T."/>
            <person name="Kajihara M."/>
            <person name="Kanai K."/>
            <person name="Kashimoto K."/>
            <person name="Kimura S."/>
            <person name="Kitagawa M."/>
            <person name="Makino K."/>
            <person name="Masuda S."/>
            <person name="Miki T."/>
            <person name="Mizobuchi K."/>
            <person name="Mori H."/>
            <person name="Motomura K."/>
            <person name="Nakamura Y."/>
            <person name="Nashimoto H."/>
            <person name="Nishio Y."/>
            <person name="Saito N."/>
            <person name="Sampei G."/>
            <person name="Seki Y."/>
            <person name="Tagami H."/>
            <person name="Takemoto K."/>
            <person name="Wada C."/>
            <person name="Yamamoto Y."/>
            <person name="Yano M."/>
            <person name="Horiuchi T."/>
        </authorList>
    </citation>
    <scope>NUCLEOTIDE SEQUENCE [LARGE SCALE GENOMIC DNA]</scope>
    <source>
        <strain>K12 / W3110 / ATCC 27325 / DSM 5911</strain>
    </source>
</reference>
<reference key="2">
    <citation type="journal article" date="1997" name="Science">
        <title>The complete genome sequence of Escherichia coli K-12.</title>
        <authorList>
            <person name="Blattner F.R."/>
            <person name="Plunkett G. III"/>
            <person name="Bloch C.A."/>
            <person name="Perna N.T."/>
            <person name="Burland V."/>
            <person name="Riley M."/>
            <person name="Collado-Vides J."/>
            <person name="Glasner J.D."/>
            <person name="Rode C.K."/>
            <person name="Mayhew G.F."/>
            <person name="Gregor J."/>
            <person name="Davis N.W."/>
            <person name="Kirkpatrick H.A."/>
            <person name="Goeden M.A."/>
            <person name="Rose D.J."/>
            <person name="Mau B."/>
            <person name="Shao Y."/>
        </authorList>
    </citation>
    <scope>NUCLEOTIDE SEQUENCE [LARGE SCALE GENOMIC DNA]</scope>
    <source>
        <strain>K12 / MG1655 / ATCC 47076</strain>
    </source>
</reference>
<reference key="3">
    <citation type="journal article" date="2006" name="Mol. Syst. Biol.">
        <title>Highly accurate genome sequences of Escherichia coli K-12 strains MG1655 and W3110.</title>
        <authorList>
            <person name="Hayashi K."/>
            <person name="Morooka N."/>
            <person name="Yamamoto Y."/>
            <person name="Fujita K."/>
            <person name="Isono K."/>
            <person name="Choi S."/>
            <person name="Ohtsubo E."/>
            <person name="Baba T."/>
            <person name="Wanner B.L."/>
            <person name="Mori H."/>
            <person name="Horiuchi T."/>
        </authorList>
    </citation>
    <scope>NUCLEOTIDE SEQUENCE [LARGE SCALE GENOMIC DNA]</scope>
    <source>
        <strain>K12 / W3110 / ATCC 27325 / DSM 5911</strain>
    </source>
</reference>
<reference key="4">
    <citation type="journal article" date="2000" name="Eur. J. Biochem.">
        <title>The hybrid-cluster protein ('prismane protein') from Escherichia coli. Characterization of the hybrid-cluster protein, redox properties of the [2Fe-2S] and [4Fe-2S-2O] clusters and identification of an associated NADH oxidoreductase containing FAD and 2Fe-2S.</title>
        <authorList>
            <person name="van den Berg W.A.M."/>
            <person name="Hagen W.R."/>
            <person name="van Dongen W.M.A.M."/>
        </authorList>
    </citation>
    <scope>CHARACTERIZATION</scope>
</reference>
<dbReference type="EC" id="1.-.-.-"/>
<dbReference type="EMBL" id="U00096">
    <property type="protein sequence ID" value="AAC73959.1"/>
    <property type="molecule type" value="Genomic_DNA"/>
</dbReference>
<dbReference type="EMBL" id="AP009048">
    <property type="protein sequence ID" value="BAA35586.2"/>
    <property type="molecule type" value="Genomic_DNA"/>
</dbReference>
<dbReference type="PIR" id="H64825">
    <property type="entry name" value="H64825"/>
</dbReference>
<dbReference type="RefSeq" id="NP_415393.1">
    <property type="nucleotide sequence ID" value="NC_000913.3"/>
</dbReference>
<dbReference type="RefSeq" id="WP_000178677.1">
    <property type="nucleotide sequence ID" value="NZ_LN832404.1"/>
</dbReference>
<dbReference type="SMR" id="P75824"/>
<dbReference type="BioGRID" id="4262097">
    <property type="interactions" value="19"/>
</dbReference>
<dbReference type="BioGRID" id="851973">
    <property type="interactions" value="13"/>
</dbReference>
<dbReference type="FunCoup" id="P75824">
    <property type="interactions" value="351"/>
</dbReference>
<dbReference type="IntAct" id="P75824">
    <property type="interactions" value="16"/>
</dbReference>
<dbReference type="STRING" id="511145.b0872"/>
<dbReference type="jPOST" id="P75824"/>
<dbReference type="PaxDb" id="511145-b0872"/>
<dbReference type="EnsemblBacteria" id="AAC73959">
    <property type="protein sequence ID" value="AAC73959"/>
    <property type="gene ID" value="b0872"/>
</dbReference>
<dbReference type="GeneID" id="93776549"/>
<dbReference type="GeneID" id="947660"/>
<dbReference type="KEGG" id="ecj:JW5117"/>
<dbReference type="KEGG" id="eco:b0872"/>
<dbReference type="KEGG" id="ecoc:C3026_05420"/>
<dbReference type="PATRIC" id="fig|1411691.4.peg.1405"/>
<dbReference type="EchoBASE" id="EB3455"/>
<dbReference type="eggNOG" id="COG1018">
    <property type="taxonomic scope" value="Bacteria"/>
</dbReference>
<dbReference type="HOGENOM" id="CLU_003827_14_3_6"/>
<dbReference type="InParanoid" id="P75824"/>
<dbReference type="OMA" id="MQVHHIH"/>
<dbReference type="OrthoDB" id="9796486at2"/>
<dbReference type="PhylomeDB" id="P75824"/>
<dbReference type="BioCyc" id="EcoCyc:G6456-MONOMER"/>
<dbReference type="BioCyc" id="MetaCyc:G6456-MONOMER"/>
<dbReference type="PRO" id="PR:P75824"/>
<dbReference type="Proteomes" id="UP000000625">
    <property type="component" value="Chromosome"/>
</dbReference>
<dbReference type="GO" id="GO:0051537">
    <property type="term" value="F:2 iron, 2 sulfur cluster binding"/>
    <property type="evidence" value="ECO:0000314"/>
    <property type="project" value="EcoCyc"/>
</dbReference>
<dbReference type="GO" id="GO:0050660">
    <property type="term" value="F:flavin adenine dinucleotide binding"/>
    <property type="evidence" value="ECO:0000314"/>
    <property type="project" value="EcoCyc"/>
</dbReference>
<dbReference type="GO" id="GO:0046872">
    <property type="term" value="F:metal ion binding"/>
    <property type="evidence" value="ECO:0007669"/>
    <property type="project" value="UniProtKB-KW"/>
</dbReference>
<dbReference type="GO" id="GO:0016491">
    <property type="term" value="F:oxidoreductase activity"/>
    <property type="evidence" value="ECO:0000318"/>
    <property type="project" value="GO_Central"/>
</dbReference>
<dbReference type="GO" id="GO:0016651">
    <property type="term" value="F:oxidoreductase activity, acting on NAD(P)H"/>
    <property type="evidence" value="ECO:0000314"/>
    <property type="project" value="EcoCyc"/>
</dbReference>
<dbReference type="CDD" id="cd00207">
    <property type="entry name" value="fer2"/>
    <property type="match status" value="1"/>
</dbReference>
<dbReference type="CDD" id="cd06215">
    <property type="entry name" value="FNR_iron_sulfur_binding_1"/>
    <property type="match status" value="1"/>
</dbReference>
<dbReference type="FunFam" id="2.40.30.10:FF:000050">
    <property type="entry name" value="NADH oxidoreductase hcr"/>
    <property type="match status" value="1"/>
</dbReference>
<dbReference type="FunFam" id="3.10.20.30:FF:000019">
    <property type="entry name" value="NADH oxidoreductase hcr"/>
    <property type="match status" value="1"/>
</dbReference>
<dbReference type="Gene3D" id="3.10.20.30">
    <property type="match status" value="1"/>
</dbReference>
<dbReference type="Gene3D" id="3.40.50.80">
    <property type="entry name" value="Nucleotide-binding domain of ferredoxin-NADP reductase (FNR) module"/>
    <property type="match status" value="1"/>
</dbReference>
<dbReference type="Gene3D" id="2.40.30.10">
    <property type="entry name" value="Translation factors"/>
    <property type="match status" value="1"/>
</dbReference>
<dbReference type="InterPro" id="IPR036010">
    <property type="entry name" value="2Fe-2S_ferredoxin-like_sf"/>
</dbReference>
<dbReference type="InterPro" id="IPR001041">
    <property type="entry name" value="2Fe-2S_ferredoxin-type"/>
</dbReference>
<dbReference type="InterPro" id="IPR012675">
    <property type="entry name" value="Beta-grasp_dom_sf"/>
</dbReference>
<dbReference type="InterPro" id="IPR008333">
    <property type="entry name" value="Cbr1-like_FAD-bd_dom"/>
</dbReference>
<dbReference type="InterPro" id="IPR017927">
    <property type="entry name" value="FAD-bd_FR_type"/>
</dbReference>
<dbReference type="InterPro" id="IPR039261">
    <property type="entry name" value="FNR_nucleotide-bd"/>
</dbReference>
<dbReference type="InterPro" id="IPR050415">
    <property type="entry name" value="MRET"/>
</dbReference>
<dbReference type="InterPro" id="IPR001433">
    <property type="entry name" value="OxRdtase_FAD/NAD-bd"/>
</dbReference>
<dbReference type="InterPro" id="IPR017938">
    <property type="entry name" value="Riboflavin_synthase-like_b-brl"/>
</dbReference>
<dbReference type="NCBIfam" id="NF007964">
    <property type="entry name" value="PRK10684.1"/>
    <property type="match status" value="1"/>
</dbReference>
<dbReference type="PANTHER" id="PTHR47354">
    <property type="entry name" value="NADH OXIDOREDUCTASE HCR"/>
    <property type="match status" value="1"/>
</dbReference>
<dbReference type="PANTHER" id="PTHR47354:SF6">
    <property type="entry name" value="NADH OXIDOREDUCTASE HCR"/>
    <property type="match status" value="1"/>
</dbReference>
<dbReference type="Pfam" id="PF00970">
    <property type="entry name" value="FAD_binding_6"/>
    <property type="match status" value="1"/>
</dbReference>
<dbReference type="Pfam" id="PF00111">
    <property type="entry name" value="Fer2"/>
    <property type="match status" value="1"/>
</dbReference>
<dbReference type="Pfam" id="PF00175">
    <property type="entry name" value="NAD_binding_1"/>
    <property type="match status" value="1"/>
</dbReference>
<dbReference type="PRINTS" id="PR00409">
    <property type="entry name" value="PHDIOXRDTASE"/>
</dbReference>
<dbReference type="SUPFAM" id="SSF54292">
    <property type="entry name" value="2Fe-2S ferredoxin-like"/>
    <property type="match status" value="1"/>
</dbReference>
<dbReference type="SUPFAM" id="SSF52343">
    <property type="entry name" value="Ferredoxin reductase-like, C-terminal NADP-linked domain"/>
    <property type="match status" value="1"/>
</dbReference>
<dbReference type="SUPFAM" id="SSF63380">
    <property type="entry name" value="Riboflavin synthase domain-like"/>
    <property type="match status" value="1"/>
</dbReference>
<dbReference type="PROSITE" id="PS51085">
    <property type="entry name" value="2FE2S_FER_2"/>
    <property type="match status" value="1"/>
</dbReference>
<dbReference type="PROSITE" id="PS51384">
    <property type="entry name" value="FAD_FR"/>
    <property type="match status" value="1"/>
</dbReference>
<organism>
    <name type="scientific">Escherichia coli (strain K12)</name>
    <dbReference type="NCBI Taxonomy" id="83333"/>
    <lineage>
        <taxon>Bacteria</taxon>
        <taxon>Pseudomonadati</taxon>
        <taxon>Pseudomonadota</taxon>
        <taxon>Gammaproteobacteria</taxon>
        <taxon>Enterobacterales</taxon>
        <taxon>Enterobacteriaceae</taxon>
        <taxon>Escherichia</taxon>
    </lineage>
</organism>
<sequence>MTMPTNQCPWRMQVHHITQETPDVWTISLICHDYYPYRAGQYALVSVRNSAETLRAYTISSTPGVSEYITLTVRRIDDGVGSQWLTRDVKRGDYLWLSDAMGEFTCDDKAEDKFLLLAAGCGVTPIMSMRRWLAKNRPQADVRVIYNVRTPQDVIFADEWRNYPVTLVAENNVTEGFIAGRLTRELLAGVPDLASRTVMTCGPAPYMDWVEQEVKALGVTRFFKEKFFTPVAEAATSGLKFTKLQPAREFYAPVGTTLLEALESNNVPVVAACRAGVCGCCKTKVVSGEYTVSSTMTLTDAEIAEGYVLACSCHPQGDLVLA</sequence>
<evidence type="ECO:0000255" key="1">
    <source>
        <dbReference type="PROSITE-ProRule" id="PRU00465"/>
    </source>
</evidence>
<evidence type="ECO:0000255" key="2">
    <source>
        <dbReference type="PROSITE-ProRule" id="PRU00716"/>
    </source>
</evidence>
<evidence type="ECO:0000305" key="3"/>